<feature type="chain" id="PRO_0000456613" description="Serine palmitoyltransferase">
    <location>
        <begin position="1"/>
        <end position="394"/>
    </location>
</feature>
<feature type="binding site" evidence="2">
    <location>
        <begin position="111"/>
        <end position="112"/>
    </location>
    <ligand>
        <name>pyridoxal 5'-phosphate</name>
        <dbReference type="ChEBI" id="CHEBI:597326"/>
    </ligand>
</feature>
<feature type="binding site" evidence="2">
    <location>
        <position position="183"/>
    </location>
    <ligand>
        <name>pyridoxal 5'-phosphate</name>
        <dbReference type="ChEBI" id="CHEBI:597326"/>
    </ligand>
</feature>
<feature type="binding site" evidence="2">
    <location>
        <position position="211"/>
    </location>
    <ligand>
        <name>pyridoxal 5'-phosphate</name>
        <dbReference type="ChEBI" id="CHEBI:597326"/>
    </ligand>
</feature>
<feature type="binding site" evidence="2">
    <location>
        <position position="239"/>
    </location>
    <ligand>
        <name>pyridoxal 5'-phosphate</name>
        <dbReference type="ChEBI" id="CHEBI:597326"/>
    </ligand>
</feature>
<feature type="modified residue" description="N6-(pyridoxal phosphate)lysine" evidence="2">
    <location>
        <position position="242"/>
    </location>
</feature>
<keyword id="KW-0012">Acyltransferase</keyword>
<keyword id="KW-0443">Lipid metabolism</keyword>
<keyword id="KW-0663">Pyridoxal phosphate</keyword>
<keyword id="KW-1185">Reference proteome</keyword>
<keyword id="KW-0746">Sphingolipid metabolism</keyword>
<keyword id="KW-0808">Transferase</keyword>
<sequence length="394" mass="43464">MGLLQEKLAKYDLPQKFMAQGVYPYFREIEGKQGTEVEMGGQHVLMFGSNAYTGLTGDERVIEAGIKAMRKYGSGCAGSRFLNGTLDLHVQLEKELAAFVGKDEALCFSTGFTVNSGVISCLTDRNDYIICDDRDHASIVDGRRLSFSQQLKYKHNDMADLEKQLQKCNPDSVKLIIVDGVFSMEGDLANLPEIVRLKHKYNATIMVDEAHGLGVFGKQGRGVCDHFGLTHEVDLIMGTFSKSLASIGGFIAADSSIINWLRHNARTYIFSASNTPAATAAALEALHIIQNEPERLNALWEATNYALRRFREAGFEIGATESPIIPLYVRDTEKTFMVTKLAFDEGVFINPVIPPACAPQDTLVRVALMATHTKEQIDSAVEKLVKAFKALDLL</sequence>
<dbReference type="EC" id="2.3.1.50" evidence="13"/>
<dbReference type="EMBL" id="AE015928">
    <property type="protein sequence ID" value="AAO75977.1"/>
    <property type="molecule type" value="Genomic_DNA"/>
</dbReference>
<dbReference type="RefSeq" id="NP_809783.1">
    <property type="nucleotide sequence ID" value="NC_004663.1"/>
</dbReference>
<dbReference type="RefSeq" id="WP_008761538.1">
    <property type="nucleotide sequence ID" value="NC_004663.1"/>
</dbReference>
<dbReference type="SMR" id="Q8A9E5"/>
<dbReference type="STRING" id="226186.BT_0870"/>
<dbReference type="PaxDb" id="226186-BT_0870"/>
<dbReference type="EnsemblBacteria" id="AAO75977">
    <property type="protein sequence ID" value="AAO75977"/>
    <property type="gene ID" value="BT_0870"/>
</dbReference>
<dbReference type="GeneID" id="60926840"/>
<dbReference type="KEGG" id="bth:BT_0870"/>
<dbReference type="PATRIC" id="fig|226186.12.peg.882"/>
<dbReference type="eggNOG" id="COG0156">
    <property type="taxonomic scope" value="Bacteria"/>
</dbReference>
<dbReference type="HOGENOM" id="CLU_015846_11_0_10"/>
<dbReference type="InParanoid" id="Q8A9E5"/>
<dbReference type="OrthoDB" id="9807157at2"/>
<dbReference type="UniPathway" id="UPA00222"/>
<dbReference type="Proteomes" id="UP000001414">
    <property type="component" value="Chromosome"/>
</dbReference>
<dbReference type="GO" id="GO:0016020">
    <property type="term" value="C:membrane"/>
    <property type="evidence" value="ECO:0007669"/>
    <property type="project" value="GOC"/>
</dbReference>
<dbReference type="GO" id="GO:0030170">
    <property type="term" value="F:pyridoxal phosphate binding"/>
    <property type="evidence" value="ECO:0007669"/>
    <property type="project" value="InterPro"/>
</dbReference>
<dbReference type="GO" id="GO:0004758">
    <property type="term" value="F:serine C-palmitoyltransferase activity"/>
    <property type="evidence" value="ECO:0000314"/>
    <property type="project" value="UniProtKB"/>
</dbReference>
<dbReference type="GO" id="GO:0030148">
    <property type="term" value="P:sphingolipid biosynthetic process"/>
    <property type="evidence" value="ECO:0000314"/>
    <property type="project" value="UniProtKB"/>
</dbReference>
<dbReference type="CDD" id="cd06454">
    <property type="entry name" value="KBL_like"/>
    <property type="match status" value="1"/>
</dbReference>
<dbReference type="FunFam" id="3.40.640.10:FF:000006">
    <property type="entry name" value="5-aminolevulinate synthase, mitochondrial"/>
    <property type="match status" value="1"/>
</dbReference>
<dbReference type="Gene3D" id="3.90.1150.10">
    <property type="entry name" value="Aspartate Aminotransferase, domain 1"/>
    <property type="match status" value="1"/>
</dbReference>
<dbReference type="Gene3D" id="3.40.640.10">
    <property type="entry name" value="Type I PLP-dependent aspartate aminotransferase-like (Major domain)"/>
    <property type="match status" value="1"/>
</dbReference>
<dbReference type="InterPro" id="IPR001917">
    <property type="entry name" value="Aminotrans_II_pyridoxalP_BS"/>
</dbReference>
<dbReference type="InterPro" id="IPR004839">
    <property type="entry name" value="Aminotransferase_I/II_large"/>
</dbReference>
<dbReference type="InterPro" id="IPR050087">
    <property type="entry name" value="AON_synthase_class-II"/>
</dbReference>
<dbReference type="InterPro" id="IPR015424">
    <property type="entry name" value="PyrdxlP-dep_Trfase"/>
</dbReference>
<dbReference type="InterPro" id="IPR015421">
    <property type="entry name" value="PyrdxlP-dep_Trfase_major"/>
</dbReference>
<dbReference type="InterPro" id="IPR015422">
    <property type="entry name" value="PyrdxlP-dep_Trfase_small"/>
</dbReference>
<dbReference type="NCBIfam" id="NF047600">
    <property type="entry name" value="SerpalmtaseCFB"/>
    <property type="match status" value="1"/>
</dbReference>
<dbReference type="PANTHER" id="PTHR13693">
    <property type="entry name" value="CLASS II AMINOTRANSFERASE/8-AMINO-7-OXONONANOATE SYNTHASE"/>
    <property type="match status" value="1"/>
</dbReference>
<dbReference type="PANTHER" id="PTHR13693:SF3">
    <property type="entry name" value="LD36009P"/>
    <property type="match status" value="1"/>
</dbReference>
<dbReference type="Pfam" id="PF00155">
    <property type="entry name" value="Aminotran_1_2"/>
    <property type="match status" value="1"/>
</dbReference>
<dbReference type="SUPFAM" id="SSF53383">
    <property type="entry name" value="PLP-dependent transferases"/>
    <property type="match status" value="1"/>
</dbReference>
<dbReference type="PROSITE" id="PS00599">
    <property type="entry name" value="AA_TRANSFER_CLASS_2"/>
    <property type="match status" value="1"/>
</dbReference>
<proteinExistence type="evidence at protein level"/>
<gene>
    <name evidence="8" type="primary">spt</name>
    <name evidence="14" type="ordered locus">BT_0870</name>
</gene>
<protein>
    <recommendedName>
        <fullName evidence="8">Serine palmitoyltransferase</fullName>
        <shortName evidence="8">SPT</shortName>
        <ecNumber evidence="13">2.3.1.50</ecNumber>
    </recommendedName>
    <alternativeName>
        <fullName evidence="11">BtSPT</fullName>
    </alternativeName>
</protein>
<comment type="function">
    <text evidence="3 4 5 6">Involved in de novo bacterial ceramide synthesis (PubMed:31071294, PubMed:32424203, PubMed:35080445, PubMed:35667415, PubMed:35725777). Catalyzes the condensation of L-serine with palmitoyl-CoA (hexadecanoyl-CoA) to produce 3-oxosphinganine (PubMed:35667415). Also capable of using alanine as substrate leading to the formation of 1-deoxysphinganine (1-deoxySa) (PubMed:31071294). Contributes to the levels of endogenous sphingolipids in its host (PubMed:31071294, PubMed:32424203).</text>
</comment>
<comment type="catalytic activity">
    <reaction evidence="13">
        <text>L-serine + hexadecanoyl-CoA + H(+) = 3-oxosphinganine + CO2 + CoA</text>
        <dbReference type="Rhea" id="RHEA:14761"/>
        <dbReference type="ChEBI" id="CHEBI:15378"/>
        <dbReference type="ChEBI" id="CHEBI:16526"/>
        <dbReference type="ChEBI" id="CHEBI:33384"/>
        <dbReference type="ChEBI" id="CHEBI:57287"/>
        <dbReference type="ChEBI" id="CHEBI:57379"/>
        <dbReference type="ChEBI" id="CHEBI:58299"/>
        <dbReference type="EC" id="2.3.1.50"/>
    </reaction>
    <physiologicalReaction direction="left-to-right" evidence="13">
        <dbReference type="Rhea" id="RHEA:14762"/>
    </physiologicalReaction>
</comment>
<comment type="cofactor">
    <cofactor evidence="2">
        <name>pyridoxal 5'-phosphate</name>
        <dbReference type="ChEBI" id="CHEBI:597326"/>
    </cofactor>
</comment>
<comment type="pathway">
    <text evidence="12">Lipid metabolism; sphingolipid metabolism.</text>
</comment>
<comment type="disruption phenotype">
    <text evidence="5 7">Abolishes sphingolipid biosynthesis and leads to cell lysis.</text>
</comment>
<comment type="miscellaneous">
    <text evidence="1">The bacterial ceramide synthesis pathway operates in a different order from that in eukaryotes. Furthermore, phylogenetic analyses support the hypothesis that the bacterial and eukaryotic ceramide pathways evolved independently.</text>
</comment>
<comment type="similarity">
    <text evidence="12">Belongs to the class-II pyridoxal-phosphate-dependent aminotransferase family.</text>
</comment>
<accession>Q8A9E5</accession>
<organism evidence="15">
    <name type="scientific">Bacteroides thetaiotaomicron (strain ATCC 29148 / DSM 2079 / JCM 5827 / CCUG 10774 / NCTC 10582 / VPI-5482 / E50)</name>
    <dbReference type="NCBI Taxonomy" id="226186"/>
    <lineage>
        <taxon>Bacteria</taxon>
        <taxon>Pseudomonadati</taxon>
        <taxon>Bacteroidota</taxon>
        <taxon>Bacteroidia</taxon>
        <taxon>Bacteroidales</taxon>
        <taxon>Bacteroidaceae</taxon>
        <taxon>Bacteroides</taxon>
    </lineage>
</organism>
<name>SPT_BACTN</name>
<reference evidence="15" key="1">
    <citation type="journal article" date="2003" name="Science">
        <title>A genomic view of the human-Bacteroides thetaiotaomicron symbiosis.</title>
        <authorList>
            <person name="Xu J."/>
            <person name="Bjursell M.K."/>
            <person name="Himrod J."/>
            <person name="Deng S."/>
            <person name="Carmichael L.K."/>
            <person name="Chiang H.C."/>
            <person name="Hooper L.V."/>
            <person name="Gordon J.I."/>
        </authorList>
    </citation>
    <scope>NUCLEOTIDE SEQUENCE [LARGE SCALE GENOMIC DNA]</scope>
    <source>
        <strain evidence="15">ATCC 29148 / DSM 2079 / JCM 5827 / CCUG 10774 / NCTC 10582 / VPI-5482 / E50</strain>
    </source>
</reference>
<reference evidence="15" key="2">
    <citation type="journal article" date="2009" name="Proc. Natl. Acad. Sci. U.S.A.">
        <title>Characterizing a model human gut microbiota composed of members of its two dominant bacterial phyla.</title>
        <authorList>
            <person name="Mahowald M.A."/>
            <person name="Rey F.E."/>
            <person name="Seedorf H."/>
            <person name="Turnbaugh P.J."/>
            <person name="Fulton R.S."/>
            <person name="Wollam A."/>
            <person name="Shah N."/>
            <person name="Wang C."/>
            <person name="Magrini V."/>
            <person name="Wilson R.K."/>
            <person name="Cantarel B.L."/>
            <person name="Coutinho P.M."/>
            <person name="Henrissat B."/>
            <person name="Crock L.W."/>
            <person name="Russell A."/>
            <person name="Verberkmoes N.C."/>
            <person name="Hettich R.L."/>
            <person name="Gordon J.I."/>
        </authorList>
    </citation>
    <scope>NUCLEOTIDE SEQUENCE [LARGE SCALE GENOMIC DNA]</scope>
    <source>
        <strain evidence="15">ATCC 29148 / DSM 2079 / JCM 5827 / CCUG 10774 / NCTC 10582 / VPI-5482 / E50</strain>
    </source>
</reference>
<reference evidence="12" key="3">
    <citation type="journal article" date="2019" name="Cell Host Microbe">
        <title>Bacteroides-Derived Sphingolipids Are Critical for Maintaining Intestinal Homeostasis and Symbiosis.</title>
        <authorList>
            <person name="Brown E.M."/>
            <person name="Ke X."/>
            <person name="Hitchcock D."/>
            <person name="Jeanfavre S."/>
            <person name="Avila-Pacheco J."/>
            <person name="Nakata T."/>
            <person name="Arthur T.D."/>
            <person name="Fornelos N."/>
            <person name="Heim C."/>
            <person name="Franzosa E.A."/>
            <person name="Watson N."/>
            <person name="Huttenhower C."/>
            <person name="Haiser H.J."/>
            <person name="Dillow G."/>
            <person name="Graham D.B."/>
            <person name="Finlay B.B."/>
            <person name="Kostic A.D."/>
            <person name="Porter J.A."/>
            <person name="Vlamakis H."/>
            <person name="Clish C.B."/>
            <person name="Xavier R.J."/>
        </authorList>
    </citation>
    <scope>FUNCTION</scope>
    <source>
        <strain evidence="8">ATCC 29148 / DSM 2079 / JCM 5827 / CCUG 10774 / NCTC 10582 / VPI-5482 / E50</strain>
    </source>
</reference>
<reference evidence="12" key="4">
    <citation type="journal article" date="2020" name="Nat. Commun.">
        <title>Sphingolipids produced by gut bacteria enter host metabolic pathways impacting ceramide levels.</title>
        <authorList>
            <person name="Johnson E.L."/>
            <person name="Heaver S.L."/>
            <person name="Waters J.L."/>
            <person name="Kim B.I."/>
            <person name="Bretin A."/>
            <person name="Goodman A.L."/>
            <person name="Gewirtz A.T."/>
            <person name="Worgall T.S."/>
            <person name="Ley R.E."/>
        </authorList>
    </citation>
    <scope>FUNCTION</scope>
    <source>
        <strain evidence="9">ATCC 29148 / DSM 2079 / JCM 5827 / CCUG 10774 / NCTC 10582 / VPI-5482 / E50</strain>
    </source>
</reference>
<reference evidence="12" key="5">
    <citation type="journal article" date="2022" name="J. Lipid Res.">
        <title>Identification and characterization of 3-ketosphinganine reductase activity encoded at the BT_0972 locus in Bacteroides thetaiotaomicron.</title>
        <authorList>
            <person name="Lee M.T."/>
            <person name="Le H."/>
            <person name="Besler K."/>
            <person name="Johnson E."/>
        </authorList>
    </citation>
    <scope>FUNCTION</scope>
    <scope>CATALYTIC ACTIVITY</scope>
    <source>
        <strain evidence="11">ATCC 29148 / DSM 2079 / JCM 5827 / CCUG 10774 / NCTC 10582 / VPI-5482 / E50</strain>
    </source>
</reference>
<reference evidence="12" key="6">
    <citation type="journal article" date="2022" name="Microbiol. Spectr.">
        <title>Lipidomics Analysis of Outer Membrane Vesicles and Elucidation of the Inositol Phosphoceramide Biosynthetic Pathway in Bacteroides thetaiotaomicron.</title>
        <authorList>
            <person name="Sartorio M.G."/>
            <person name="Valguarnera E."/>
            <person name="Hsu F.F."/>
            <person name="Feldman M.F."/>
        </authorList>
    </citation>
    <scope>FUNCTION</scope>
    <scope>DISRUPTION PHENOTYPE</scope>
    <source>
        <strain evidence="10">ATCC 29148 / DSM 2079 / JCM 5827 / CCUG 10774 / NCTC 10582 / VPI-5482 / E50</strain>
    </source>
</reference>
<reference key="7">
    <citation type="journal article" date="2022" name="Nat. Microbiol.">
        <title>Characterization of inositol lipid metabolism in gut-associated Bacteroidetes.</title>
        <authorList>
            <person name="Heaver S.L."/>
            <person name="Le H.H."/>
            <person name="Tang P."/>
            <person name="Basle A."/>
            <person name="Mirretta Barone C."/>
            <person name="Vu D.L."/>
            <person name="Waters J.L."/>
            <person name="Marles-Wright J."/>
            <person name="Johnson E.L."/>
            <person name="Campopiano D.J."/>
            <person name="Ley R.E."/>
        </authorList>
    </citation>
    <scope>FUNCTION</scope>
    <scope>DISRUPTION PHENOTYPE</scope>
</reference>
<evidence type="ECO:0000250" key="1">
    <source>
        <dbReference type="UniProtKB" id="A0A0H3C7E9"/>
    </source>
</evidence>
<evidence type="ECO:0000250" key="2">
    <source>
        <dbReference type="UniProtKB" id="P12998"/>
    </source>
</evidence>
<evidence type="ECO:0000269" key="3">
    <source>
    </source>
</evidence>
<evidence type="ECO:0000269" key="4">
    <source>
    </source>
</evidence>
<evidence type="ECO:0000269" key="5">
    <source>
    </source>
</evidence>
<evidence type="ECO:0000269" key="6">
    <source>
    </source>
</evidence>
<evidence type="ECO:0000269" key="7">
    <source>
    </source>
</evidence>
<evidence type="ECO:0000303" key="8">
    <source>
    </source>
</evidence>
<evidence type="ECO:0000303" key="9">
    <source>
    </source>
</evidence>
<evidence type="ECO:0000303" key="10">
    <source>
    </source>
</evidence>
<evidence type="ECO:0000303" key="11">
    <source>
    </source>
</evidence>
<evidence type="ECO:0000305" key="12"/>
<evidence type="ECO:0000305" key="13">
    <source>
    </source>
</evidence>
<evidence type="ECO:0000312" key="14">
    <source>
        <dbReference type="EMBL" id="AAO75977.1"/>
    </source>
</evidence>
<evidence type="ECO:0000312" key="15">
    <source>
        <dbReference type="Proteomes" id="UP000001414"/>
    </source>
</evidence>